<gene>
    <name evidence="1" type="primary">hscA</name>
    <name type="ordered locus">SFV_2574</name>
</gene>
<accession>Q0T1Z3</accession>
<evidence type="ECO:0000255" key="1">
    <source>
        <dbReference type="HAMAP-Rule" id="MF_00679"/>
    </source>
</evidence>
<protein>
    <recommendedName>
        <fullName evidence="1">Chaperone protein HscA</fullName>
    </recommendedName>
    <alternativeName>
        <fullName evidence="1">Hsc66</fullName>
    </alternativeName>
</protein>
<sequence length="616" mass="65740">MALLQISEPGLSAAPHQRRLAAGIDLGTTNSLVATVRSGQAETLADHEGRHLLPSVVHYQQQGHSVGYDARTNAALDTANTISSVKRLMGRSLADIQQRYPHLPYQFQASENGLPMIETAAGLLNPVRVSADILKALAARATEALAGELDGVVITVPAYFDDAQRQGTKDAARLAGLHVLRLLNEPTAAAIAYGLDSGQEGVIAVYDLGGGTFDISILRLSRGVFEVLATGGDSALGGDDFDHLLADYIREQADIPDRSDNRVQRELLDATIAAKIALSDADSVTVNVAGWQGEISREQFNELIAPLVKRTLLACRRALKDAGVEADEVLEVVMVGGSTRVPLVRERVGEFFGRPPLTSIDPDKVVAIGAAIQADILVGNKPDSEMLLLDVIPLSLGLETMGGLVEKVIPRNTTIPVARAQDFTTFKDGQTAMSIHVMQGERELVQDCRSLARFALRGIPALPAGGAHIRVTFQVDADGLLSVTAMEKSTGVEASIQVKPSYGLTDSEIASMIKDSMSYAEQDVKARMLAEQKVEAARVLESLHGALAADAALLSAAERQVIDNAAAHLSEVAQGDDVDAIEQAIKNVDKQTQDFAARRMDQSVRRALKGHSVDEV</sequence>
<feature type="chain" id="PRO_1000044897" description="Chaperone protein HscA">
    <location>
        <begin position="1"/>
        <end position="616"/>
    </location>
</feature>
<keyword id="KW-0067">ATP-binding</keyword>
<keyword id="KW-0143">Chaperone</keyword>
<keyword id="KW-0547">Nucleotide-binding</keyword>
<comment type="function">
    <text evidence="1">Chaperone involved in the maturation of iron-sulfur cluster-containing proteins. Has a low intrinsic ATPase activity which is markedly stimulated by HscB. Involved in the maturation of IscU.</text>
</comment>
<comment type="similarity">
    <text evidence="1">Belongs to the heat shock protein 70 family.</text>
</comment>
<dbReference type="EMBL" id="CP000266">
    <property type="protein sequence ID" value="ABF04672.1"/>
    <property type="molecule type" value="Genomic_DNA"/>
</dbReference>
<dbReference type="RefSeq" id="WP_001196601.1">
    <property type="nucleotide sequence ID" value="NC_008258.1"/>
</dbReference>
<dbReference type="SMR" id="Q0T1Z3"/>
<dbReference type="KEGG" id="sfv:SFV_2574"/>
<dbReference type="HOGENOM" id="CLU_005965_2_1_6"/>
<dbReference type="Proteomes" id="UP000000659">
    <property type="component" value="Chromosome"/>
</dbReference>
<dbReference type="GO" id="GO:0005524">
    <property type="term" value="F:ATP binding"/>
    <property type="evidence" value="ECO:0007669"/>
    <property type="project" value="UniProtKB-KW"/>
</dbReference>
<dbReference type="GO" id="GO:0016887">
    <property type="term" value="F:ATP hydrolysis activity"/>
    <property type="evidence" value="ECO:0007669"/>
    <property type="project" value="UniProtKB-UniRule"/>
</dbReference>
<dbReference type="GO" id="GO:0140662">
    <property type="term" value="F:ATP-dependent protein folding chaperone"/>
    <property type="evidence" value="ECO:0007669"/>
    <property type="project" value="InterPro"/>
</dbReference>
<dbReference type="GO" id="GO:0051082">
    <property type="term" value="F:unfolded protein binding"/>
    <property type="evidence" value="ECO:0007669"/>
    <property type="project" value="InterPro"/>
</dbReference>
<dbReference type="GO" id="GO:0016226">
    <property type="term" value="P:iron-sulfur cluster assembly"/>
    <property type="evidence" value="ECO:0007669"/>
    <property type="project" value="InterPro"/>
</dbReference>
<dbReference type="CDD" id="cd10236">
    <property type="entry name" value="ASKHA_NBD_HSP70_HscA"/>
    <property type="match status" value="1"/>
</dbReference>
<dbReference type="FunFam" id="1.20.1270.10:FF:000006">
    <property type="entry name" value="Chaperone protein HscA"/>
    <property type="match status" value="1"/>
</dbReference>
<dbReference type="FunFam" id="3.30.420.40:FF:000046">
    <property type="entry name" value="Chaperone protein HscA"/>
    <property type="match status" value="1"/>
</dbReference>
<dbReference type="FunFam" id="3.90.640.10:FF:000013">
    <property type="entry name" value="Chaperone protein HscA"/>
    <property type="match status" value="1"/>
</dbReference>
<dbReference type="FunFam" id="2.60.34.10:FF:000005">
    <property type="entry name" value="Chaperone protein HscA homolog"/>
    <property type="match status" value="1"/>
</dbReference>
<dbReference type="FunFam" id="3.30.420.40:FF:000020">
    <property type="entry name" value="Chaperone protein HscA homolog"/>
    <property type="match status" value="1"/>
</dbReference>
<dbReference type="Gene3D" id="1.20.1270.10">
    <property type="match status" value="1"/>
</dbReference>
<dbReference type="Gene3D" id="3.30.420.40">
    <property type="match status" value="2"/>
</dbReference>
<dbReference type="Gene3D" id="3.90.640.10">
    <property type="entry name" value="Actin, Chain A, domain 4"/>
    <property type="match status" value="1"/>
</dbReference>
<dbReference type="Gene3D" id="2.60.34.10">
    <property type="entry name" value="Substrate Binding Domain Of DNAk, Chain A, domain 1"/>
    <property type="match status" value="1"/>
</dbReference>
<dbReference type="HAMAP" id="MF_00679">
    <property type="entry name" value="HscA"/>
    <property type="match status" value="1"/>
</dbReference>
<dbReference type="InterPro" id="IPR043129">
    <property type="entry name" value="ATPase_NBD"/>
</dbReference>
<dbReference type="InterPro" id="IPR018181">
    <property type="entry name" value="Heat_shock_70_CS"/>
</dbReference>
<dbReference type="InterPro" id="IPR042039">
    <property type="entry name" value="HscA_NBD"/>
</dbReference>
<dbReference type="InterPro" id="IPR029048">
    <property type="entry name" value="HSP70_C_sf"/>
</dbReference>
<dbReference type="InterPro" id="IPR029047">
    <property type="entry name" value="HSP70_peptide-bd_sf"/>
</dbReference>
<dbReference type="InterPro" id="IPR013126">
    <property type="entry name" value="Hsp_70_fam"/>
</dbReference>
<dbReference type="InterPro" id="IPR010236">
    <property type="entry name" value="ISC_FeS_clus_asmbl_HscA"/>
</dbReference>
<dbReference type="NCBIfam" id="TIGR01991">
    <property type="entry name" value="HscA"/>
    <property type="match status" value="1"/>
</dbReference>
<dbReference type="NCBIfam" id="NF003520">
    <property type="entry name" value="PRK05183.1"/>
    <property type="match status" value="1"/>
</dbReference>
<dbReference type="PANTHER" id="PTHR19375">
    <property type="entry name" value="HEAT SHOCK PROTEIN 70KDA"/>
    <property type="match status" value="1"/>
</dbReference>
<dbReference type="Pfam" id="PF00012">
    <property type="entry name" value="HSP70"/>
    <property type="match status" value="1"/>
</dbReference>
<dbReference type="PRINTS" id="PR00301">
    <property type="entry name" value="HEATSHOCK70"/>
</dbReference>
<dbReference type="SUPFAM" id="SSF53067">
    <property type="entry name" value="Actin-like ATPase domain"/>
    <property type="match status" value="2"/>
</dbReference>
<dbReference type="SUPFAM" id="SSF100934">
    <property type="entry name" value="Heat shock protein 70kD (HSP70), C-terminal subdomain"/>
    <property type="match status" value="1"/>
</dbReference>
<dbReference type="SUPFAM" id="SSF100920">
    <property type="entry name" value="Heat shock protein 70kD (HSP70), peptide-binding domain"/>
    <property type="match status" value="1"/>
</dbReference>
<dbReference type="PROSITE" id="PS00297">
    <property type="entry name" value="HSP70_1"/>
    <property type="match status" value="1"/>
</dbReference>
<dbReference type="PROSITE" id="PS00329">
    <property type="entry name" value="HSP70_2"/>
    <property type="match status" value="1"/>
</dbReference>
<dbReference type="PROSITE" id="PS01036">
    <property type="entry name" value="HSP70_3"/>
    <property type="match status" value="1"/>
</dbReference>
<organism>
    <name type="scientific">Shigella flexneri serotype 5b (strain 8401)</name>
    <dbReference type="NCBI Taxonomy" id="373384"/>
    <lineage>
        <taxon>Bacteria</taxon>
        <taxon>Pseudomonadati</taxon>
        <taxon>Pseudomonadota</taxon>
        <taxon>Gammaproteobacteria</taxon>
        <taxon>Enterobacterales</taxon>
        <taxon>Enterobacteriaceae</taxon>
        <taxon>Shigella</taxon>
    </lineage>
</organism>
<name>HSCA_SHIF8</name>
<reference key="1">
    <citation type="journal article" date="2006" name="BMC Genomics">
        <title>Complete genome sequence of Shigella flexneri 5b and comparison with Shigella flexneri 2a.</title>
        <authorList>
            <person name="Nie H."/>
            <person name="Yang F."/>
            <person name="Zhang X."/>
            <person name="Yang J."/>
            <person name="Chen L."/>
            <person name="Wang J."/>
            <person name="Xiong Z."/>
            <person name="Peng J."/>
            <person name="Sun L."/>
            <person name="Dong J."/>
            <person name="Xue Y."/>
            <person name="Xu X."/>
            <person name="Chen S."/>
            <person name="Yao Z."/>
            <person name="Shen Y."/>
            <person name="Jin Q."/>
        </authorList>
    </citation>
    <scope>NUCLEOTIDE SEQUENCE [LARGE SCALE GENOMIC DNA]</scope>
    <source>
        <strain>8401</strain>
    </source>
</reference>
<proteinExistence type="inferred from homology"/>